<comment type="function">
    <text evidence="1">Catalyzes the deamination of dCTP to dUTP.</text>
</comment>
<comment type="catalytic activity">
    <reaction evidence="1">
        <text>dCTP + H2O + H(+) = dUTP + NH4(+)</text>
        <dbReference type="Rhea" id="RHEA:22680"/>
        <dbReference type="ChEBI" id="CHEBI:15377"/>
        <dbReference type="ChEBI" id="CHEBI:15378"/>
        <dbReference type="ChEBI" id="CHEBI:28938"/>
        <dbReference type="ChEBI" id="CHEBI:61481"/>
        <dbReference type="ChEBI" id="CHEBI:61555"/>
        <dbReference type="EC" id="3.5.4.13"/>
    </reaction>
</comment>
<comment type="pathway">
    <text evidence="1">Pyrimidine metabolism; dUMP biosynthesis; dUMP from dCTP (dUTP route): step 1/2.</text>
</comment>
<comment type="subunit">
    <text evidence="1">Homotrimer.</text>
</comment>
<comment type="similarity">
    <text evidence="1">Belongs to the dCTP deaminase family.</text>
</comment>
<accession>B4RZ25</accession>
<accession>F2GCU6</accession>
<feature type="chain" id="PRO_1000096405" description="dCTP deaminase">
    <location>
        <begin position="1"/>
        <end position="197"/>
    </location>
</feature>
<feature type="active site" description="Proton donor/acceptor" evidence="1">
    <location>
        <position position="138"/>
    </location>
</feature>
<feature type="binding site" evidence="1">
    <location>
        <begin position="110"/>
        <end position="115"/>
    </location>
    <ligand>
        <name>dCTP</name>
        <dbReference type="ChEBI" id="CHEBI:61481"/>
    </ligand>
</feature>
<feature type="binding site" evidence="1">
    <location>
        <position position="128"/>
    </location>
    <ligand>
        <name>dCTP</name>
        <dbReference type="ChEBI" id="CHEBI:61481"/>
    </ligand>
</feature>
<feature type="binding site" evidence="1">
    <location>
        <begin position="136"/>
        <end position="138"/>
    </location>
    <ligand>
        <name>dCTP</name>
        <dbReference type="ChEBI" id="CHEBI:61481"/>
    </ligand>
</feature>
<feature type="binding site" evidence="1">
    <location>
        <position position="171"/>
    </location>
    <ligand>
        <name>dCTP</name>
        <dbReference type="ChEBI" id="CHEBI:61481"/>
    </ligand>
</feature>
<feature type="binding site" evidence="1">
    <location>
        <position position="182"/>
    </location>
    <ligand>
        <name>dCTP</name>
        <dbReference type="ChEBI" id="CHEBI:61481"/>
    </ligand>
</feature>
<protein>
    <recommendedName>
        <fullName evidence="1">dCTP deaminase</fullName>
        <ecNumber evidence="1">3.5.4.13</ecNumber>
    </recommendedName>
    <alternativeName>
        <fullName evidence="1">Deoxycytidine triphosphate deaminase</fullName>
    </alternativeName>
</protein>
<proteinExistence type="inferred from homology"/>
<dbReference type="EC" id="3.5.4.13" evidence="1"/>
<dbReference type="EMBL" id="CP001103">
    <property type="protein sequence ID" value="AEA98152.1"/>
    <property type="molecule type" value="Genomic_DNA"/>
</dbReference>
<dbReference type="RefSeq" id="WP_012518477.1">
    <property type="nucleotide sequence ID" value="NC_011138.3"/>
</dbReference>
<dbReference type="SMR" id="B4RZ25"/>
<dbReference type="KEGG" id="amc:MADE_1010070"/>
<dbReference type="HOGENOM" id="CLU_087476_2_0_6"/>
<dbReference type="UniPathway" id="UPA00610">
    <property type="reaction ID" value="UER00665"/>
</dbReference>
<dbReference type="Proteomes" id="UP000001870">
    <property type="component" value="Chromosome"/>
</dbReference>
<dbReference type="GO" id="GO:0008829">
    <property type="term" value="F:dCTP deaminase activity"/>
    <property type="evidence" value="ECO:0007669"/>
    <property type="project" value="UniProtKB-UniRule"/>
</dbReference>
<dbReference type="GO" id="GO:0000166">
    <property type="term" value="F:nucleotide binding"/>
    <property type="evidence" value="ECO:0007669"/>
    <property type="project" value="UniProtKB-KW"/>
</dbReference>
<dbReference type="GO" id="GO:0006226">
    <property type="term" value="P:dUMP biosynthetic process"/>
    <property type="evidence" value="ECO:0007669"/>
    <property type="project" value="UniProtKB-UniPathway"/>
</dbReference>
<dbReference type="GO" id="GO:0006229">
    <property type="term" value="P:dUTP biosynthetic process"/>
    <property type="evidence" value="ECO:0007669"/>
    <property type="project" value="UniProtKB-UniRule"/>
</dbReference>
<dbReference type="GO" id="GO:0015949">
    <property type="term" value="P:nucleobase-containing small molecule interconversion"/>
    <property type="evidence" value="ECO:0007669"/>
    <property type="project" value="TreeGrafter"/>
</dbReference>
<dbReference type="CDD" id="cd07557">
    <property type="entry name" value="trimeric_dUTPase"/>
    <property type="match status" value="1"/>
</dbReference>
<dbReference type="FunFam" id="2.70.40.10:FF:000003">
    <property type="entry name" value="dCTP deaminase"/>
    <property type="match status" value="1"/>
</dbReference>
<dbReference type="Gene3D" id="2.70.40.10">
    <property type="match status" value="1"/>
</dbReference>
<dbReference type="HAMAP" id="MF_00146">
    <property type="entry name" value="dCTP_deaminase"/>
    <property type="match status" value="1"/>
</dbReference>
<dbReference type="InterPro" id="IPR011962">
    <property type="entry name" value="dCTP_deaminase"/>
</dbReference>
<dbReference type="InterPro" id="IPR036157">
    <property type="entry name" value="dUTPase-like_sf"/>
</dbReference>
<dbReference type="InterPro" id="IPR033704">
    <property type="entry name" value="dUTPase_trimeric"/>
</dbReference>
<dbReference type="NCBIfam" id="TIGR02274">
    <property type="entry name" value="dCTP_deam"/>
    <property type="match status" value="1"/>
</dbReference>
<dbReference type="PANTHER" id="PTHR42680">
    <property type="entry name" value="DCTP DEAMINASE"/>
    <property type="match status" value="1"/>
</dbReference>
<dbReference type="PANTHER" id="PTHR42680:SF3">
    <property type="entry name" value="DCTP DEAMINASE"/>
    <property type="match status" value="1"/>
</dbReference>
<dbReference type="Pfam" id="PF22769">
    <property type="entry name" value="DCD"/>
    <property type="match status" value="1"/>
</dbReference>
<dbReference type="SUPFAM" id="SSF51283">
    <property type="entry name" value="dUTPase-like"/>
    <property type="match status" value="1"/>
</dbReference>
<keyword id="KW-0378">Hydrolase</keyword>
<keyword id="KW-0546">Nucleotide metabolism</keyword>
<keyword id="KW-0547">Nucleotide-binding</keyword>
<reference key="1">
    <citation type="journal article" date="2008" name="ISME J.">
        <title>Comparative genomics of two ecotypes of the marine planktonic copiotroph Alteromonas macleodii suggests alternative lifestyles associated with different kinds of particulate organic matter.</title>
        <authorList>
            <person name="Ivars-Martinez E."/>
            <person name="Martin-Cuadrado A.-B."/>
            <person name="D'Auria G."/>
            <person name="Mira A."/>
            <person name="Ferriera S."/>
            <person name="Johnson J."/>
            <person name="Friedman R."/>
            <person name="Rodriguez-Valera F."/>
        </authorList>
    </citation>
    <scope>NUCLEOTIDE SEQUENCE [LARGE SCALE GENOMIC DNA]</scope>
    <source>
        <strain>DSM 17117 / CIP 110805 / LMG 28347 / Deep ecotype</strain>
    </source>
</reference>
<evidence type="ECO:0000255" key="1">
    <source>
        <dbReference type="HAMAP-Rule" id="MF_00146"/>
    </source>
</evidence>
<organism>
    <name type="scientific">Alteromonas mediterranea (strain DSM 17117 / CIP 110805 / LMG 28347 / Deep ecotype)</name>
    <dbReference type="NCBI Taxonomy" id="1774373"/>
    <lineage>
        <taxon>Bacteria</taxon>
        <taxon>Pseudomonadati</taxon>
        <taxon>Pseudomonadota</taxon>
        <taxon>Gammaproteobacteria</taxon>
        <taxon>Alteromonadales</taxon>
        <taxon>Alteromonadaceae</taxon>
        <taxon>Alteromonas/Salinimonas group</taxon>
        <taxon>Alteromonas</taxon>
    </lineage>
</organism>
<name>DCD_ALTMD</name>
<gene>
    <name evidence="1" type="primary">dcd</name>
    <name type="ordered locus">MADE_1010070</name>
</gene>
<sequence length="197" mass="21777">MRLCDRDIYQHLQDGKIKIDPTPDYDQISGVTVDIRLGNKFRVFEDHQAPFIDLSGPKAQVQEALDHVMSDEIELEEGKAFFLHPGELALAITHESVTLPDNIVGWLDGRSSLARLGLMVHVTAHRIDPGWSGNIVLEFYNSGKLPLALRPKMKIGALSFEVLSAPAEKPYNARVDAKYKGQAGAVASRISSDDQSK</sequence>